<protein>
    <recommendedName>
        <fullName evidence="1">UPF0756 membrane protein LBA0919</fullName>
    </recommendedName>
</protein>
<accession>Q5FKJ8</accession>
<reference key="1">
    <citation type="journal article" date="2005" name="Proc. Natl. Acad. Sci. U.S.A.">
        <title>Complete genome sequence of the probiotic lactic acid bacterium Lactobacillus acidophilus NCFM.</title>
        <authorList>
            <person name="Altermann E."/>
            <person name="Russell W.M."/>
            <person name="Azcarate-Peril M.A."/>
            <person name="Barrangou R."/>
            <person name="Buck B.L."/>
            <person name="McAuliffe O."/>
            <person name="Souther N."/>
            <person name="Dobson A."/>
            <person name="Duong T."/>
            <person name="Callanan M."/>
            <person name="Lick S."/>
            <person name="Hamrick A."/>
            <person name="Cano R."/>
            <person name="Klaenhammer T.R."/>
        </authorList>
    </citation>
    <scope>NUCLEOTIDE SEQUENCE [LARGE SCALE GENOMIC DNA]</scope>
    <source>
        <strain>ATCC 700396 / NCK56 / N2 / NCFM</strain>
    </source>
</reference>
<organism>
    <name type="scientific">Lactobacillus acidophilus (strain ATCC 700396 / NCK56 / N2 / NCFM)</name>
    <dbReference type="NCBI Taxonomy" id="272621"/>
    <lineage>
        <taxon>Bacteria</taxon>
        <taxon>Bacillati</taxon>
        <taxon>Bacillota</taxon>
        <taxon>Bacilli</taxon>
        <taxon>Lactobacillales</taxon>
        <taxon>Lactobacillaceae</taxon>
        <taxon>Lactobacillus</taxon>
    </lineage>
</organism>
<evidence type="ECO:0000255" key="1">
    <source>
        <dbReference type="HAMAP-Rule" id="MF_01874"/>
    </source>
</evidence>
<keyword id="KW-1003">Cell membrane</keyword>
<keyword id="KW-0472">Membrane</keyword>
<keyword id="KW-1185">Reference proteome</keyword>
<keyword id="KW-0812">Transmembrane</keyword>
<keyword id="KW-1133">Transmembrane helix</keyword>
<feature type="chain" id="PRO_0000388891" description="UPF0756 membrane protein LBA0919">
    <location>
        <begin position="1"/>
        <end position="151"/>
    </location>
</feature>
<feature type="transmembrane region" description="Helical" evidence="1">
    <location>
        <begin position="4"/>
        <end position="24"/>
    </location>
</feature>
<feature type="transmembrane region" description="Helical" evidence="1">
    <location>
        <begin position="52"/>
        <end position="72"/>
    </location>
</feature>
<feature type="transmembrane region" description="Helical" evidence="1">
    <location>
        <begin position="78"/>
        <end position="98"/>
    </location>
</feature>
<feature type="transmembrane region" description="Helical" evidence="1">
    <location>
        <begin position="115"/>
        <end position="135"/>
    </location>
</feature>
<gene>
    <name type="ordered locus">LBA0919</name>
</gene>
<proteinExistence type="inferred from homology"/>
<name>Y919_LACAC</name>
<comment type="subcellular location">
    <subcellularLocation>
        <location evidence="1">Cell membrane</location>
        <topology evidence="1">Multi-pass membrane protein</topology>
    </subcellularLocation>
</comment>
<comment type="similarity">
    <text evidence="1">Belongs to the UPF0756 family.</text>
</comment>
<dbReference type="EMBL" id="CP000033">
    <property type="protein sequence ID" value="AAV42776.1"/>
    <property type="molecule type" value="Genomic_DNA"/>
</dbReference>
<dbReference type="RefSeq" id="WP_003547019.1">
    <property type="nucleotide sequence ID" value="NC_006814.3"/>
</dbReference>
<dbReference type="RefSeq" id="YP_193807.1">
    <property type="nucleotide sequence ID" value="NC_006814.3"/>
</dbReference>
<dbReference type="STRING" id="272621.LBA0919"/>
<dbReference type="DNASU" id="3251870"/>
<dbReference type="KEGG" id="lac:LBA0919"/>
<dbReference type="PATRIC" id="fig|272621.13.peg.876"/>
<dbReference type="eggNOG" id="COG2707">
    <property type="taxonomic scope" value="Bacteria"/>
</dbReference>
<dbReference type="HOGENOM" id="CLU_125889_1_0_9"/>
<dbReference type="OrthoDB" id="80306at2"/>
<dbReference type="BioCyc" id="LACI272621:G1G49-926-MONOMER"/>
<dbReference type="Proteomes" id="UP000006381">
    <property type="component" value="Chromosome"/>
</dbReference>
<dbReference type="GO" id="GO:0005886">
    <property type="term" value="C:plasma membrane"/>
    <property type="evidence" value="ECO:0007669"/>
    <property type="project" value="UniProtKB-SubCell"/>
</dbReference>
<dbReference type="HAMAP" id="MF_01874">
    <property type="entry name" value="UPF0756"/>
    <property type="match status" value="1"/>
</dbReference>
<dbReference type="InterPro" id="IPR007382">
    <property type="entry name" value="UPF0756_TM"/>
</dbReference>
<dbReference type="PANTHER" id="PTHR38452">
    <property type="entry name" value="UPF0756 MEMBRANE PROTEIN YEAL"/>
    <property type="match status" value="1"/>
</dbReference>
<dbReference type="PANTHER" id="PTHR38452:SF1">
    <property type="entry name" value="UPF0756 MEMBRANE PROTEIN YEAL"/>
    <property type="match status" value="1"/>
</dbReference>
<dbReference type="Pfam" id="PF04284">
    <property type="entry name" value="DUF441"/>
    <property type="match status" value="1"/>
</dbReference>
<sequence>MESWLFLALILVVALLGKNMSLIIATAVVMLFKLLPFTGKWLPTIQAKGINWGVTIISVAILIPIATGQIGFKDLIRTFKTPAGWIAILAGIAVAVLSRYGVNQLAAVPQVTVALVLGTIIGVVAFKGVAAGPVIASGMTYLVVTLFNLHF</sequence>